<reference key="1">
    <citation type="submission" date="2009-07" db="EMBL/GenBank/DDBJ databases">
        <title>Complete sequence of Pectobacterium carotovorum subsp. carotovorum PC1.</title>
        <authorList>
            <consortium name="US DOE Joint Genome Institute"/>
            <person name="Lucas S."/>
            <person name="Copeland A."/>
            <person name="Lapidus A."/>
            <person name="Glavina del Rio T."/>
            <person name="Tice H."/>
            <person name="Bruce D."/>
            <person name="Goodwin L."/>
            <person name="Pitluck S."/>
            <person name="Munk A.C."/>
            <person name="Brettin T."/>
            <person name="Detter J.C."/>
            <person name="Han C."/>
            <person name="Tapia R."/>
            <person name="Larimer F."/>
            <person name="Land M."/>
            <person name="Hauser L."/>
            <person name="Kyrpides N."/>
            <person name="Mikhailova N."/>
            <person name="Balakrishnan V."/>
            <person name="Glasner J."/>
            <person name="Perna N.T."/>
        </authorList>
    </citation>
    <scope>NUCLEOTIDE SEQUENCE [LARGE SCALE GENOMIC DNA]</scope>
    <source>
        <strain>PC1</strain>
    </source>
</reference>
<comment type="function">
    <text evidence="1">Succinyl-CoA synthetase functions in the citric acid cycle (TCA), coupling the hydrolysis of succinyl-CoA to the synthesis of either ATP or GTP and thus represents the only step of substrate-level phosphorylation in the TCA. The beta subunit provides nucleotide specificity of the enzyme and binds the substrate succinate, while the binding sites for coenzyme A and phosphate are found in the alpha subunit.</text>
</comment>
<comment type="catalytic activity">
    <reaction evidence="1">
        <text>succinate + ATP + CoA = succinyl-CoA + ADP + phosphate</text>
        <dbReference type="Rhea" id="RHEA:17661"/>
        <dbReference type="ChEBI" id="CHEBI:30031"/>
        <dbReference type="ChEBI" id="CHEBI:30616"/>
        <dbReference type="ChEBI" id="CHEBI:43474"/>
        <dbReference type="ChEBI" id="CHEBI:57287"/>
        <dbReference type="ChEBI" id="CHEBI:57292"/>
        <dbReference type="ChEBI" id="CHEBI:456216"/>
        <dbReference type="EC" id="6.2.1.5"/>
    </reaction>
    <physiologicalReaction direction="right-to-left" evidence="1">
        <dbReference type="Rhea" id="RHEA:17663"/>
    </physiologicalReaction>
</comment>
<comment type="catalytic activity">
    <reaction evidence="1">
        <text>GTP + succinate + CoA = succinyl-CoA + GDP + phosphate</text>
        <dbReference type="Rhea" id="RHEA:22120"/>
        <dbReference type="ChEBI" id="CHEBI:30031"/>
        <dbReference type="ChEBI" id="CHEBI:37565"/>
        <dbReference type="ChEBI" id="CHEBI:43474"/>
        <dbReference type="ChEBI" id="CHEBI:57287"/>
        <dbReference type="ChEBI" id="CHEBI:57292"/>
        <dbReference type="ChEBI" id="CHEBI:58189"/>
    </reaction>
    <physiologicalReaction direction="right-to-left" evidence="1">
        <dbReference type="Rhea" id="RHEA:22122"/>
    </physiologicalReaction>
</comment>
<comment type="cofactor">
    <cofactor evidence="1">
        <name>Mg(2+)</name>
        <dbReference type="ChEBI" id="CHEBI:18420"/>
    </cofactor>
    <text evidence="1">Binds 1 Mg(2+) ion per subunit.</text>
</comment>
<comment type="pathway">
    <text evidence="1">Carbohydrate metabolism; tricarboxylic acid cycle; succinate from succinyl-CoA (ligase route): step 1/1.</text>
</comment>
<comment type="subunit">
    <text evidence="1">Heterotetramer of two alpha and two beta subunits.</text>
</comment>
<comment type="similarity">
    <text evidence="1">Belongs to the succinate/malate CoA ligase beta subunit family.</text>
</comment>
<keyword id="KW-0067">ATP-binding</keyword>
<keyword id="KW-0436">Ligase</keyword>
<keyword id="KW-0460">Magnesium</keyword>
<keyword id="KW-0479">Metal-binding</keyword>
<keyword id="KW-0547">Nucleotide-binding</keyword>
<keyword id="KW-0816">Tricarboxylic acid cycle</keyword>
<proteinExistence type="inferred from homology"/>
<feature type="chain" id="PRO_1000212028" description="Succinate--CoA ligase [ADP-forming] subunit beta">
    <location>
        <begin position="1"/>
        <end position="388"/>
    </location>
</feature>
<feature type="domain" description="ATP-grasp" evidence="1">
    <location>
        <begin position="9"/>
        <end position="244"/>
    </location>
</feature>
<feature type="binding site" evidence="1">
    <location>
        <position position="46"/>
    </location>
    <ligand>
        <name>ATP</name>
        <dbReference type="ChEBI" id="CHEBI:30616"/>
    </ligand>
</feature>
<feature type="binding site" evidence="1">
    <location>
        <begin position="53"/>
        <end position="55"/>
    </location>
    <ligand>
        <name>ATP</name>
        <dbReference type="ChEBI" id="CHEBI:30616"/>
    </ligand>
</feature>
<feature type="binding site" evidence="1">
    <location>
        <position position="99"/>
    </location>
    <ligand>
        <name>ATP</name>
        <dbReference type="ChEBI" id="CHEBI:30616"/>
    </ligand>
</feature>
<feature type="binding site" evidence="1">
    <location>
        <position position="102"/>
    </location>
    <ligand>
        <name>ATP</name>
        <dbReference type="ChEBI" id="CHEBI:30616"/>
    </ligand>
</feature>
<feature type="binding site" evidence="1">
    <location>
        <position position="107"/>
    </location>
    <ligand>
        <name>ATP</name>
        <dbReference type="ChEBI" id="CHEBI:30616"/>
    </ligand>
</feature>
<feature type="binding site" evidence="1">
    <location>
        <position position="199"/>
    </location>
    <ligand>
        <name>Mg(2+)</name>
        <dbReference type="ChEBI" id="CHEBI:18420"/>
    </ligand>
</feature>
<feature type="binding site" evidence="1">
    <location>
        <position position="213"/>
    </location>
    <ligand>
        <name>Mg(2+)</name>
        <dbReference type="ChEBI" id="CHEBI:18420"/>
    </ligand>
</feature>
<feature type="binding site" evidence="1">
    <location>
        <position position="264"/>
    </location>
    <ligand>
        <name>substrate</name>
        <note>ligand shared with subunit alpha</note>
    </ligand>
</feature>
<feature type="binding site" evidence="1">
    <location>
        <begin position="321"/>
        <end position="323"/>
    </location>
    <ligand>
        <name>substrate</name>
        <note>ligand shared with subunit alpha</note>
    </ligand>
</feature>
<accession>C6DCD6</accession>
<protein>
    <recommendedName>
        <fullName evidence="1">Succinate--CoA ligase [ADP-forming] subunit beta</fullName>
        <ecNumber evidence="1">6.2.1.5</ecNumber>
    </recommendedName>
    <alternativeName>
        <fullName evidence="1">Succinyl-CoA synthetase subunit beta</fullName>
        <shortName evidence="1">SCS-beta</shortName>
    </alternativeName>
</protein>
<evidence type="ECO:0000255" key="1">
    <source>
        <dbReference type="HAMAP-Rule" id="MF_00558"/>
    </source>
</evidence>
<organism>
    <name type="scientific">Pectobacterium carotovorum subsp. carotovorum (strain PC1)</name>
    <dbReference type="NCBI Taxonomy" id="561230"/>
    <lineage>
        <taxon>Bacteria</taxon>
        <taxon>Pseudomonadati</taxon>
        <taxon>Pseudomonadota</taxon>
        <taxon>Gammaproteobacteria</taxon>
        <taxon>Enterobacterales</taxon>
        <taxon>Pectobacteriaceae</taxon>
        <taxon>Pectobacterium</taxon>
    </lineage>
</organism>
<name>SUCC_PECCP</name>
<dbReference type="EC" id="6.2.1.5" evidence="1"/>
<dbReference type="EMBL" id="CP001657">
    <property type="protein sequence ID" value="ACT12286.1"/>
    <property type="molecule type" value="Genomic_DNA"/>
</dbReference>
<dbReference type="RefSeq" id="WP_015839518.1">
    <property type="nucleotide sequence ID" value="NC_012917.1"/>
</dbReference>
<dbReference type="SMR" id="C6DCD6"/>
<dbReference type="STRING" id="561230.PC1_1238"/>
<dbReference type="GeneID" id="67794990"/>
<dbReference type="KEGG" id="pct:PC1_1238"/>
<dbReference type="eggNOG" id="COG0045">
    <property type="taxonomic scope" value="Bacteria"/>
</dbReference>
<dbReference type="HOGENOM" id="CLU_037430_0_2_6"/>
<dbReference type="OrthoDB" id="9802602at2"/>
<dbReference type="UniPathway" id="UPA00223">
    <property type="reaction ID" value="UER00999"/>
</dbReference>
<dbReference type="Proteomes" id="UP000002736">
    <property type="component" value="Chromosome"/>
</dbReference>
<dbReference type="GO" id="GO:0005829">
    <property type="term" value="C:cytosol"/>
    <property type="evidence" value="ECO:0007669"/>
    <property type="project" value="TreeGrafter"/>
</dbReference>
<dbReference type="GO" id="GO:0042709">
    <property type="term" value="C:succinate-CoA ligase complex"/>
    <property type="evidence" value="ECO:0007669"/>
    <property type="project" value="TreeGrafter"/>
</dbReference>
<dbReference type="GO" id="GO:0005524">
    <property type="term" value="F:ATP binding"/>
    <property type="evidence" value="ECO:0007669"/>
    <property type="project" value="UniProtKB-UniRule"/>
</dbReference>
<dbReference type="GO" id="GO:0000287">
    <property type="term" value="F:magnesium ion binding"/>
    <property type="evidence" value="ECO:0007669"/>
    <property type="project" value="UniProtKB-UniRule"/>
</dbReference>
<dbReference type="GO" id="GO:0004775">
    <property type="term" value="F:succinate-CoA ligase (ADP-forming) activity"/>
    <property type="evidence" value="ECO:0007669"/>
    <property type="project" value="UniProtKB-UniRule"/>
</dbReference>
<dbReference type="GO" id="GO:0004776">
    <property type="term" value="F:succinate-CoA ligase (GDP-forming) activity"/>
    <property type="evidence" value="ECO:0007669"/>
    <property type="project" value="RHEA"/>
</dbReference>
<dbReference type="GO" id="GO:0006104">
    <property type="term" value="P:succinyl-CoA metabolic process"/>
    <property type="evidence" value="ECO:0007669"/>
    <property type="project" value="TreeGrafter"/>
</dbReference>
<dbReference type="GO" id="GO:0006099">
    <property type="term" value="P:tricarboxylic acid cycle"/>
    <property type="evidence" value="ECO:0007669"/>
    <property type="project" value="UniProtKB-UniRule"/>
</dbReference>
<dbReference type="FunFam" id="3.30.1490.20:FF:000002">
    <property type="entry name" value="Succinate--CoA ligase [ADP-forming] subunit beta"/>
    <property type="match status" value="1"/>
</dbReference>
<dbReference type="FunFam" id="3.30.470.20:FF:000002">
    <property type="entry name" value="Succinate--CoA ligase [ADP-forming] subunit beta"/>
    <property type="match status" value="1"/>
</dbReference>
<dbReference type="FunFam" id="3.40.50.261:FF:000001">
    <property type="entry name" value="Succinate--CoA ligase [ADP-forming] subunit beta"/>
    <property type="match status" value="1"/>
</dbReference>
<dbReference type="Gene3D" id="3.30.1490.20">
    <property type="entry name" value="ATP-grasp fold, A domain"/>
    <property type="match status" value="1"/>
</dbReference>
<dbReference type="Gene3D" id="3.30.470.20">
    <property type="entry name" value="ATP-grasp fold, B domain"/>
    <property type="match status" value="1"/>
</dbReference>
<dbReference type="Gene3D" id="3.40.50.261">
    <property type="entry name" value="Succinyl-CoA synthetase domains"/>
    <property type="match status" value="1"/>
</dbReference>
<dbReference type="HAMAP" id="MF_00558">
    <property type="entry name" value="Succ_CoA_beta"/>
    <property type="match status" value="1"/>
</dbReference>
<dbReference type="InterPro" id="IPR011761">
    <property type="entry name" value="ATP-grasp"/>
</dbReference>
<dbReference type="InterPro" id="IPR013650">
    <property type="entry name" value="ATP-grasp_succ-CoA_synth-type"/>
</dbReference>
<dbReference type="InterPro" id="IPR013815">
    <property type="entry name" value="ATP_grasp_subdomain_1"/>
</dbReference>
<dbReference type="InterPro" id="IPR017866">
    <property type="entry name" value="Succ-CoA_synthase_bsu_CS"/>
</dbReference>
<dbReference type="InterPro" id="IPR005811">
    <property type="entry name" value="SUCC_ACL_C"/>
</dbReference>
<dbReference type="InterPro" id="IPR005809">
    <property type="entry name" value="Succ_CoA_ligase-like_bsu"/>
</dbReference>
<dbReference type="InterPro" id="IPR016102">
    <property type="entry name" value="Succinyl-CoA_synth-like"/>
</dbReference>
<dbReference type="NCBIfam" id="NF001913">
    <property type="entry name" value="PRK00696.1"/>
    <property type="match status" value="1"/>
</dbReference>
<dbReference type="NCBIfam" id="TIGR01016">
    <property type="entry name" value="sucCoAbeta"/>
    <property type="match status" value="1"/>
</dbReference>
<dbReference type="PANTHER" id="PTHR11815:SF10">
    <property type="entry name" value="SUCCINATE--COA LIGASE [GDP-FORMING] SUBUNIT BETA, MITOCHONDRIAL"/>
    <property type="match status" value="1"/>
</dbReference>
<dbReference type="PANTHER" id="PTHR11815">
    <property type="entry name" value="SUCCINYL-COA SYNTHETASE BETA CHAIN"/>
    <property type="match status" value="1"/>
</dbReference>
<dbReference type="Pfam" id="PF08442">
    <property type="entry name" value="ATP-grasp_2"/>
    <property type="match status" value="1"/>
</dbReference>
<dbReference type="Pfam" id="PF00549">
    <property type="entry name" value="Ligase_CoA"/>
    <property type="match status" value="1"/>
</dbReference>
<dbReference type="PIRSF" id="PIRSF001554">
    <property type="entry name" value="SucCS_beta"/>
    <property type="match status" value="1"/>
</dbReference>
<dbReference type="SUPFAM" id="SSF56059">
    <property type="entry name" value="Glutathione synthetase ATP-binding domain-like"/>
    <property type="match status" value="1"/>
</dbReference>
<dbReference type="SUPFAM" id="SSF52210">
    <property type="entry name" value="Succinyl-CoA synthetase domains"/>
    <property type="match status" value="1"/>
</dbReference>
<dbReference type="PROSITE" id="PS50975">
    <property type="entry name" value="ATP_GRASP"/>
    <property type="match status" value="1"/>
</dbReference>
<dbReference type="PROSITE" id="PS01217">
    <property type="entry name" value="SUCCINYL_COA_LIG_3"/>
    <property type="match status" value="1"/>
</dbReference>
<sequence>MNLHEYQAKQLFARYGLPAPTGYACTTPREAEEAASKIGAGPWVVKCQVHAGGRGKAGGVKVVSNKEDIRAFAENWLGKKLVTYQTDAQGQPVHQILVEAATDIDKELYLGAVVDRGTRRVVFMASTEGGVEIEKVAEETPELIHKAAIDPLVGPQPYQGRELAFKLGLSGKQVAQFTKIFMGLATLFLERDLALVEINPLVITKQGDLVCLDGKLGADGNALFRQPELREMRDPSQEDSREAHAAQWELNYVALDGNIGCMVNGAGLAMGTMDIVKLHGGSPANFLDVGGGATKERVTEAFKIILSDDKVKAVFVNIFGGIVRCDLIADGIIGAVAEVGVNVPVVVRLEGNNAELGAKKLADSGLNIIAATSLTGAAQQVVAAVEGK</sequence>
<gene>
    <name evidence="1" type="primary">sucC</name>
    <name type="ordered locus">PC1_1238</name>
</gene>